<gene>
    <name type="primary">mileS</name>
    <name type="ORF">DDB_G0293030</name>
</gene>
<evidence type="ECO:0000250" key="1"/>
<evidence type="ECO:0000255" key="2"/>
<evidence type="ECO:0000305" key="3"/>
<comment type="catalytic activity">
    <reaction>
        <text>tRNA(Ile) + L-isoleucine + ATP = L-isoleucyl-tRNA(Ile) + AMP + diphosphate</text>
        <dbReference type="Rhea" id="RHEA:11060"/>
        <dbReference type="Rhea" id="RHEA-COMP:9666"/>
        <dbReference type="Rhea" id="RHEA-COMP:9695"/>
        <dbReference type="ChEBI" id="CHEBI:30616"/>
        <dbReference type="ChEBI" id="CHEBI:33019"/>
        <dbReference type="ChEBI" id="CHEBI:58045"/>
        <dbReference type="ChEBI" id="CHEBI:78442"/>
        <dbReference type="ChEBI" id="CHEBI:78528"/>
        <dbReference type="ChEBI" id="CHEBI:456215"/>
        <dbReference type="EC" id="6.1.1.5"/>
    </reaction>
</comment>
<comment type="subcellular location">
    <subcellularLocation>
        <location evidence="1">Mitochondrion matrix</location>
    </subcellularLocation>
</comment>
<comment type="similarity">
    <text evidence="3">Belongs to the class-I aminoacyl-tRNA synthetase family.</text>
</comment>
<feature type="transit peptide" description="Mitochondrion" evidence="2">
    <location>
        <begin position="1"/>
        <end position="32"/>
    </location>
</feature>
<feature type="chain" id="PRO_0000327970" description="Probable isoleucine--tRNA ligase, mitochondrial">
    <location>
        <begin position="33"/>
        <end position="1034"/>
    </location>
</feature>
<feature type="short sequence motif" description="'HIGH' region" evidence="1">
    <location>
        <begin position="94"/>
        <end position="104"/>
    </location>
</feature>
<feature type="short sequence motif" description="'KMSKS' region" evidence="1">
    <location>
        <begin position="655"/>
        <end position="659"/>
    </location>
</feature>
<feature type="binding site" evidence="1">
    <location>
        <position position="658"/>
    </location>
    <ligand>
        <name>ATP</name>
        <dbReference type="ChEBI" id="CHEBI:30616"/>
    </ligand>
</feature>
<dbReference type="EC" id="6.1.1.5"/>
<dbReference type="EMBL" id="AAFI02000199">
    <property type="protein sequence ID" value="EAL60867.1"/>
    <property type="molecule type" value="Genomic_DNA"/>
</dbReference>
<dbReference type="RefSeq" id="XP_629275.1">
    <property type="nucleotide sequence ID" value="XM_629273.1"/>
</dbReference>
<dbReference type="SMR" id="Q54CE4"/>
<dbReference type="FunCoup" id="Q54CE4">
    <property type="interactions" value="651"/>
</dbReference>
<dbReference type="STRING" id="44689.Q54CE4"/>
<dbReference type="PaxDb" id="44689-DDB0231256"/>
<dbReference type="EnsemblProtists" id="EAL60867">
    <property type="protein sequence ID" value="EAL60867"/>
    <property type="gene ID" value="DDB_G0293030"/>
</dbReference>
<dbReference type="GeneID" id="8628997"/>
<dbReference type="KEGG" id="ddi:DDB_G0293030"/>
<dbReference type="dictyBase" id="DDB_G0293030">
    <property type="gene designation" value="mileS"/>
</dbReference>
<dbReference type="VEuPathDB" id="AmoebaDB:DDB_G0293030"/>
<dbReference type="eggNOG" id="KOG0433">
    <property type="taxonomic scope" value="Eukaryota"/>
</dbReference>
<dbReference type="HOGENOM" id="CLU_001493_7_1_1"/>
<dbReference type="InParanoid" id="Q54CE4"/>
<dbReference type="OMA" id="HCWRCKT"/>
<dbReference type="PhylomeDB" id="Q54CE4"/>
<dbReference type="Reactome" id="R-DDI-9837999">
    <property type="pathway name" value="Mitochondrial protein degradation"/>
</dbReference>
<dbReference type="PRO" id="PR:Q54CE4"/>
<dbReference type="Proteomes" id="UP000002195">
    <property type="component" value="Chromosome 6"/>
</dbReference>
<dbReference type="GO" id="GO:0005759">
    <property type="term" value="C:mitochondrial matrix"/>
    <property type="evidence" value="ECO:0007669"/>
    <property type="project" value="UniProtKB-SubCell"/>
</dbReference>
<dbReference type="GO" id="GO:0005739">
    <property type="term" value="C:mitochondrion"/>
    <property type="evidence" value="ECO:0000250"/>
    <property type="project" value="dictyBase"/>
</dbReference>
<dbReference type="GO" id="GO:0002161">
    <property type="term" value="F:aminoacyl-tRNA deacylase activity"/>
    <property type="evidence" value="ECO:0007669"/>
    <property type="project" value="InterPro"/>
</dbReference>
<dbReference type="GO" id="GO:0005524">
    <property type="term" value="F:ATP binding"/>
    <property type="evidence" value="ECO:0007669"/>
    <property type="project" value="UniProtKB-KW"/>
</dbReference>
<dbReference type="GO" id="GO:0004822">
    <property type="term" value="F:isoleucine-tRNA ligase activity"/>
    <property type="evidence" value="ECO:0000318"/>
    <property type="project" value="GO_Central"/>
</dbReference>
<dbReference type="GO" id="GO:0000049">
    <property type="term" value="F:tRNA binding"/>
    <property type="evidence" value="ECO:0007669"/>
    <property type="project" value="InterPro"/>
</dbReference>
<dbReference type="GO" id="GO:0006428">
    <property type="term" value="P:isoleucyl-tRNA aminoacylation"/>
    <property type="evidence" value="ECO:0000318"/>
    <property type="project" value="GO_Central"/>
</dbReference>
<dbReference type="GO" id="GO:0032543">
    <property type="term" value="P:mitochondrial translation"/>
    <property type="evidence" value="ECO:0000318"/>
    <property type="project" value="GO_Central"/>
</dbReference>
<dbReference type="CDD" id="cd07960">
    <property type="entry name" value="Anticodon_Ia_Ile_BEm"/>
    <property type="match status" value="1"/>
</dbReference>
<dbReference type="FunFam" id="3.40.50.620:FF:000152">
    <property type="entry name" value="Isoleucine--tRNA ligase"/>
    <property type="match status" value="1"/>
</dbReference>
<dbReference type="FunFam" id="1.10.730.20:FF:000002">
    <property type="entry name" value="isoleucine--tRNA ligase, mitochondrial"/>
    <property type="match status" value="1"/>
</dbReference>
<dbReference type="FunFam" id="3.90.740.10:FF:000027">
    <property type="entry name" value="Isoleucyl-tRNA synthetase 2, mitochondrial"/>
    <property type="match status" value="1"/>
</dbReference>
<dbReference type="Gene3D" id="1.10.730.20">
    <property type="match status" value="1"/>
</dbReference>
<dbReference type="Gene3D" id="3.40.50.620">
    <property type="entry name" value="HUPs"/>
    <property type="match status" value="2"/>
</dbReference>
<dbReference type="Gene3D" id="1.10.10.830">
    <property type="entry name" value="Ile-tRNA synthetase CP2 domain-like"/>
    <property type="match status" value="1"/>
</dbReference>
<dbReference type="Gene3D" id="3.90.740.10">
    <property type="entry name" value="Valyl/Leucyl/Isoleucyl-tRNA synthetase, editing domain"/>
    <property type="match status" value="1"/>
</dbReference>
<dbReference type="HAMAP" id="MF_02002">
    <property type="entry name" value="Ile_tRNA_synth_type1"/>
    <property type="match status" value="1"/>
</dbReference>
<dbReference type="InterPro" id="IPR001412">
    <property type="entry name" value="aa-tRNA-synth_I_CS"/>
</dbReference>
<dbReference type="InterPro" id="IPR002300">
    <property type="entry name" value="aa-tRNA-synth_Ia"/>
</dbReference>
<dbReference type="InterPro" id="IPR033708">
    <property type="entry name" value="Anticodon_Ile_BEm"/>
</dbReference>
<dbReference type="InterPro" id="IPR002301">
    <property type="entry name" value="Ile-tRNA-ligase"/>
</dbReference>
<dbReference type="InterPro" id="IPR023585">
    <property type="entry name" value="Ile-tRNA-ligase_type1"/>
</dbReference>
<dbReference type="InterPro" id="IPR050081">
    <property type="entry name" value="Ile-tRNA_ligase"/>
</dbReference>
<dbReference type="InterPro" id="IPR013155">
    <property type="entry name" value="M/V/L/I-tRNA-synth_anticd-bd"/>
</dbReference>
<dbReference type="InterPro" id="IPR014729">
    <property type="entry name" value="Rossmann-like_a/b/a_fold"/>
</dbReference>
<dbReference type="InterPro" id="IPR009080">
    <property type="entry name" value="tRNAsynth_Ia_anticodon-bd"/>
</dbReference>
<dbReference type="InterPro" id="IPR009008">
    <property type="entry name" value="Val/Leu/Ile-tRNA-synth_edit"/>
</dbReference>
<dbReference type="NCBIfam" id="TIGR00392">
    <property type="entry name" value="ileS"/>
    <property type="match status" value="1"/>
</dbReference>
<dbReference type="PANTHER" id="PTHR42765:SF1">
    <property type="entry name" value="ISOLEUCINE--TRNA LIGASE, MITOCHONDRIAL"/>
    <property type="match status" value="1"/>
</dbReference>
<dbReference type="PANTHER" id="PTHR42765">
    <property type="entry name" value="SOLEUCYL-TRNA SYNTHETASE"/>
    <property type="match status" value="1"/>
</dbReference>
<dbReference type="Pfam" id="PF08264">
    <property type="entry name" value="Anticodon_1"/>
    <property type="match status" value="1"/>
</dbReference>
<dbReference type="Pfam" id="PF00133">
    <property type="entry name" value="tRNA-synt_1"/>
    <property type="match status" value="1"/>
</dbReference>
<dbReference type="PRINTS" id="PR00984">
    <property type="entry name" value="TRNASYNTHILE"/>
</dbReference>
<dbReference type="SUPFAM" id="SSF47323">
    <property type="entry name" value="Anticodon-binding domain of a subclass of class I aminoacyl-tRNA synthetases"/>
    <property type="match status" value="1"/>
</dbReference>
<dbReference type="SUPFAM" id="SSF52374">
    <property type="entry name" value="Nucleotidylyl transferase"/>
    <property type="match status" value="1"/>
</dbReference>
<dbReference type="SUPFAM" id="SSF50677">
    <property type="entry name" value="ValRS/IleRS/LeuRS editing domain"/>
    <property type="match status" value="1"/>
</dbReference>
<dbReference type="PROSITE" id="PS00178">
    <property type="entry name" value="AA_TRNA_LIGASE_I"/>
    <property type="match status" value="1"/>
</dbReference>
<keyword id="KW-0030">Aminoacyl-tRNA synthetase</keyword>
<keyword id="KW-0067">ATP-binding</keyword>
<keyword id="KW-0436">Ligase</keyword>
<keyword id="KW-0496">Mitochondrion</keyword>
<keyword id="KW-0547">Nucleotide-binding</keyword>
<keyword id="KW-0648">Protein biosynthesis</keyword>
<keyword id="KW-1185">Reference proteome</keyword>
<keyword id="KW-0809">Transit peptide</keyword>
<name>SYIM_DICDI</name>
<protein>
    <recommendedName>
        <fullName>Probable isoleucine--tRNA ligase, mitochondrial</fullName>
        <ecNumber>6.1.1.5</ecNumber>
    </recommendedName>
    <alternativeName>
        <fullName>Isoleucyl-tRNA synthetase</fullName>
        <shortName>IleRS</shortName>
    </alternativeName>
</protein>
<accession>Q54CE4</accession>
<reference key="1">
    <citation type="journal article" date="2005" name="Nature">
        <title>The genome of the social amoeba Dictyostelium discoideum.</title>
        <authorList>
            <person name="Eichinger L."/>
            <person name="Pachebat J.A."/>
            <person name="Gloeckner G."/>
            <person name="Rajandream M.A."/>
            <person name="Sucgang R."/>
            <person name="Berriman M."/>
            <person name="Song J."/>
            <person name="Olsen R."/>
            <person name="Szafranski K."/>
            <person name="Xu Q."/>
            <person name="Tunggal B."/>
            <person name="Kummerfeld S."/>
            <person name="Madera M."/>
            <person name="Konfortov B.A."/>
            <person name="Rivero F."/>
            <person name="Bankier A.T."/>
            <person name="Lehmann R."/>
            <person name="Hamlin N."/>
            <person name="Davies R."/>
            <person name="Gaudet P."/>
            <person name="Fey P."/>
            <person name="Pilcher K."/>
            <person name="Chen G."/>
            <person name="Saunders D."/>
            <person name="Sodergren E.J."/>
            <person name="Davis P."/>
            <person name="Kerhornou A."/>
            <person name="Nie X."/>
            <person name="Hall N."/>
            <person name="Anjard C."/>
            <person name="Hemphill L."/>
            <person name="Bason N."/>
            <person name="Farbrother P."/>
            <person name="Desany B."/>
            <person name="Just E."/>
            <person name="Morio T."/>
            <person name="Rost R."/>
            <person name="Churcher C.M."/>
            <person name="Cooper J."/>
            <person name="Haydock S."/>
            <person name="van Driessche N."/>
            <person name="Cronin A."/>
            <person name="Goodhead I."/>
            <person name="Muzny D.M."/>
            <person name="Mourier T."/>
            <person name="Pain A."/>
            <person name="Lu M."/>
            <person name="Harper D."/>
            <person name="Lindsay R."/>
            <person name="Hauser H."/>
            <person name="James K.D."/>
            <person name="Quiles M."/>
            <person name="Madan Babu M."/>
            <person name="Saito T."/>
            <person name="Buchrieser C."/>
            <person name="Wardroper A."/>
            <person name="Felder M."/>
            <person name="Thangavelu M."/>
            <person name="Johnson D."/>
            <person name="Knights A."/>
            <person name="Loulseged H."/>
            <person name="Mungall K.L."/>
            <person name="Oliver K."/>
            <person name="Price C."/>
            <person name="Quail M.A."/>
            <person name="Urushihara H."/>
            <person name="Hernandez J."/>
            <person name="Rabbinowitsch E."/>
            <person name="Steffen D."/>
            <person name="Sanders M."/>
            <person name="Ma J."/>
            <person name="Kohara Y."/>
            <person name="Sharp S."/>
            <person name="Simmonds M.N."/>
            <person name="Spiegler S."/>
            <person name="Tivey A."/>
            <person name="Sugano S."/>
            <person name="White B."/>
            <person name="Walker D."/>
            <person name="Woodward J.R."/>
            <person name="Winckler T."/>
            <person name="Tanaka Y."/>
            <person name="Shaulsky G."/>
            <person name="Schleicher M."/>
            <person name="Weinstock G.M."/>
            <person name="Rosenthal A."/>
            <person name="Cox E.C."/>
            <person name="Chisholm R.L."/>
            <person name="Gibbs R.A."/>
            <person name="Loomis W.F."/>
            <person name="Platzer M."/>
            <person name="Kay R.R."/>
            <person name="Williams J.G."/>
            <person name="Dear P.H."/>
            <person name="Noegel A.A."/>
            <person name="Barrell B.G."/>
            <person name="Kuspa A."/>
        </authorList>
    </citation>
    <scope>NUCLEOTIDE SEQUENCE [LARGE SCALE GENOMIC DNA]</scope>
    <source>
        <strain>AX4</strain>
    </source>
</reference>
<organism>
    <name type="scientific">Dictyostelium discoideum</name>
    <name type="common">Social amoeba</name>
    <dbReference type="NCBI Taxonomy" id="44689"/>
    <lineage>
        <taxon>Eukaryota</taxon>
        <taxon>Amoebozoa</taxon>
        <taxon>Evosea</taxon>
        <taxon>Eumycetozoa</taxon>
        <taxon>Dictyostelia</taxon>
        <taxon>Dictyosteliales</taxon>
        <taxon>Dictyosteliaceae</taxon>
        <taxon>Dictyostelium</taxon>
    </lineage>
</organism>
<sequence>MISLNNSFFNKRVIVNSFNNYKRSFGTKSQNEESAIVDSNHSFAHTLNLPKTTFSMKANAATREPTLLKDPYKLYKWQLENNKGENWVFHDGPPYANGDLHMGHALNKILKDIVNRYKVLKGFKVNYIPGWDCHGLPIEQQAFKKLKKSSDMKASDIRKIAGDFARKEIEKQSKGFQEMGILGDWENPYKTLDYGYEVEQIQTFYDMFNKGYIYRGVKPVHWSPSSRTALADAELEYNNNHTSKSIFVKFNVKSLSNHILNNLPTTSDINKAEMVISAIIWTTTPWTIPANQAICVNSEMDYILVKPIESEQYRNEMFIISKERLESLTKSFNIGELKVILEFKGEQLKGTITKHPQYDRESPIITGDHVIEGSGTGLVHTAPGHGVEDFQICQQQYPDLKVLSPVNDLGCFTDEVGEKFVGLEVLGDGNEAVINDLETIGSLLHKEDYIHKYPYDWRTKKPIIIRTTLQWFVGLKNIQKTALQSIERVNMVPPSGSNRLSSMIGKRTDWCISRQRVWGCPIPVLYNCKTNEPLINDESINHIKELFGKFGSDCWFEMSTQQLLPPSLKDQHENFVKGTDTMDVWFDSGTSWRGVLVERGIIDKDTGRADIYLEGSDQHRGWFQSSLLTSVCVRDIEPYKNVVTHGFLLDESGIKMSKSIGNTIVPSTVIKGGPNKVQNPPYGVDLLRTWVASSDYSKDISIGPNILIKILDGIKKIRNTLRFMLASNFDFDPTIHAIPYEKLSSLDKYALHRVFKLQESVTRHYDQFQFQKVHTEIINFSIEISSFYFDVIKRHLYAESPNSHSRRSTQTVLFKMLDVINIALAPITVHTSEDVFLHQYQFKNNGKGLDKNLIENSVFAHGWDQLPSQYENELISNQFTNIIAIRDVVNRVLQSMRSQGIIGRSDETIMELTVTNEESSPFYDNLFAINSQLDDIFCVSNVLLKKFNTFEKDVEQQQQQQQQQQQQQPQQIEPNSKGEFIFNTIISNNSKQLGRIEVLLKISDKFKCPRCWRHTSIENDKVCKPCDSVLNSLK</sequence>
<proteinExistence type="inferred from homology"/>